<gene>
    <name evidence="1" type="primary">aroE</name>
    <name type="ordered locus">STER_0689</name>
</gene>
<dbReference type="EC" id="1.1.1.25" evidence="1"/>
<dbReference type="EMBL" id="CP000419">
    <property type="protein sequence ID" value="ABJ65947.1"/>
    <property type="molecule type" value="Genomic_DNA"/>
</dbReference>
<dbReference type="RefSeq" id="WP_011680943.1">
    <property type="nucleotide sequence ID" value="NC_008532.1"/>
</dbReference>
<dbReference type="SMR" id="Q03LH5"/>
<dbReference type="KEGG" id="ste:STER_0689"/>
<dbReference type="HOGENOM" id="CLU_044063_4_1_9"/>
<dbReference type="UniPathway" id="UPA00053">
    <property type="reaction ID" value="UER00087"/>
</dbReference>
<dbReference type="GO" id="GO:0050661">
    <property type="term" value="F:NADP binding"/>
    <property type="evidence" value="ECO:0007669"/>
    <property type="project" value="InterPro"/>
</dbReference>
<dbReference type="GO" id="GO:0004764">
    <property type="term" value="F:shikimate 3-dehydrogenase (NADP+) activity"/>
    <property type="evidence" value="ECO:0007669"/>
    <property type="project" value="UniProtKB-UniRule"/>
</dbReference>
<dbReference type="GO" id="GO:0008652">
    <property type="term" value="P:amino acid biosynthetic process"/>
    <property type="evidence" value="ECO:0007669"/>
    <property type="project" value="UniProtKB-KW"/>
</dbReference>
<dbReference type="GO" id="GO:0009073">
    <property type="term" value="P:aromatic amino acid family biosynthetic process"/>
    <property type="evidence" value="ECO:0007669"/>
    <property type="project" value="UniProtKB-KW"/>
</dbReference>
<dbReference type="GO" id="GO:0009423">
    <property type="term" value="P:chorismate biosynthetic process"/>
    <property type="evidence" value="ECO:0007669"/>
    <property type="project" value="UniProtKB-UniRule"/>
</dbReference>
<dbReference type="GO" id="GO:0019632">
    <property type="term" value="P:shikimate metabolic process"/>
    <property type="evidence" value="ECO:0007669"/>
    <property type="project" value="InterPro"/>
</dbReference>
<dbReference type="CDD" id="cd01065">
    <property type="entry name" value="NAD_bind_Shikimate_DH"/>
    <property type="match status" value="1"/>
</dbReference>
<dbReference type="Gene3D" id="3.40.50.10860">
    <property type="entry name" value="Leucine Dehydrogenase, chain A, domain 1"/>
    <property type="match status" value="1"/>
</dbReference>
<dbReference type="Gene3D" id="3.40.50.720">
    <property type="entry name" value="NAD(P)-binding Rossmann-like Domain"/>
    <property type="match status" value="1"/>
</dbReference>
<dbReference type="HAMAP" id="MF_00222">
    <property type="entry name" value="Shikimate_DH_AroE"/>
    <property type="match status" value="1"/>
</dbReference>
<dbReference type="InterPro" id="IPR046346">
    <property type="entry name" value="Aminoacid_DH-like_N_sf"/>
</dbReference>
<dbReference type="InterPro" id="IPR036291">
    <property type="entry name" value="NAD(P)-bd_dom_sf"/>
</dbReference>
<dbReference type="InterPro" id="IPR041121">
    <property type="entry name" value="SDH_C"/>
</dbReference>
<dbReference type="InterPro" id="IPR011342">
    <property type="entry name" value="Shikimate_DH"/>
</dbReference>
<dbReference type="InterPro" id="IPR013708">
    <property type="entry name" value="Shikimate_DH-bd_N"/>
</dbReference>
<dbReference type="InterPro" id="IPR022893">
    <property type="entry name" value="Shikimate_DH_fam"/>
</dbReference>
<dbReference type="NCBIfam" id="TIGR00507">
    <property type="entry name" value="aroE"/>
    <property type="match status" value="1"/>
</dbReference>
<dbReference type="NCBIfam" id="NF001315">
    <property type="entry name" value="PRK00258.2-4"/>
    <property type="match status" value="1"/>
</dbReference>
<dbReference type="PANTHER" id="PTHR21089:SF1">
    <property type="entry name" value="BIFUNCTIONAL 3-DEHYDROQUINATE DEHYDRATASE_SHIKIMATE DEHYDROGENASE, CHLOROPLASTIC"/>
    <property type="match status" value="1"/>
</dbReference>
<dbReference type="PANTHER" id="PTHR21089">
    <property type="entry name" value="SHIKIMATE DEHYDROGENASE"/>
    <property type="match status" value="1"/>
</dbReference>
<dbReference type="Pfam" id="PF18317">
    <property type="entry name" value="SDH_C"/>
    <property type="match status" value="1"/>
</dbReference>
<dbReference type="Pfam" id="PF08501">
    <property type="entry name" value="Shikimate_dh_N"/>
    <property type="match status" value="1"/>
</dbReference>
<dbReference type="SUPFAM" id="SSF53223">
    <property type="entry name" value="Aminoacid dehydrogenase-like, N-terminal domain"/>
    <property type="match status" value="1"/>
</dbReference>
<dbReference type="SUPFAM" id="SSF51735">
    <property type="entry name" value="NAD(P)-binding Rossmann-fold domains"/>
    <property type="match status" value="1"/>
</dbReference>
<keyword id="KW-0028">Amino-acid biosynthesis</keyword>
<keyword id="KW-0057">Aromatic amino acid biosynthesis</keyword>
<keyword id="KW-0521">NADP</keyword>
<keyword id="KW-0560">Oxidoreductase</keyword>
<feature type="chain" id="PRO_1000021354" description="Shikimate dehydrogenase (NADP(+))">
    <location>
        <begin position="1"/>
        <end position="285"/>
    </location>
</feature>
<feature type="active site" description="Proton acceptor" evidence="1">
    <location>
        <position position="71"/>
    </location>
</feature>
<feature type="binding site" evidence="1">
    <location>
        <begin position="20"/>
        <end position="22"/>
    </location>
    <ligand>
        <name>shikimate</name>
        <dbReference type="ChEBI" id="CHEBI:36208"/>
    </ligand>
</feature>
<feature type="binding site" evidence="1">
    <location>
        <position position="67"/>
    </location>
    <ligand>
        <name>shikimate</name>
        <dbReference type="ChEBI" id="CHEBI:36208"/>
    </ligand>
</feature>
<feature type="binding site" evidence="1">
    <location>
        <position position="92"/>
    </location>
    <ligand>
        <name>shikimate</name>
        <dbReference type="ChEBI" id="CHEBI:36208"/>
    </ligand>
</feature>
<feature type="binding site" evidence="1">
    <location>
        <position position="107"/>
    </location>
    <ligand>
        <name>shikimate</name>
        <dbReference type="ChEBI" id="CHEBI:36208"/>
    </ligand>
</feature>
<feature type="binding site" evidence="1">
    <location>
        <begin position="129"/>
        <end position="133"/>
    </location>
    <ligand>
        <name>NADP(+)</name>
        <dbReference type="ChEBI" id="CHEBI:58349"/>
    </ligand>
</feature>
<feature type="binding site" evidence="1">
    <location>
        <position position="227"/>
    </location>
    <ligand>
        <name>NADP(+)</name>
        <dbReference type="ChEBI" id="CHEBI:58349"/>
    </ligand>
</feature>
<feature type="binding site" evidence="1">
    <location>
        <position position="229"/>
    </location>
    <ligand>
        <name>shikimate</name>
        <dbReference type="ChEBI" id="CHEBI:36208"/>
    </ligand>
</feature>
<feature type="binding site" evidence="1">
    <location>
        <position position="250"/>
    </location>
    <ligand>
        <name>NADP(+)</name>
        <dbReference type="ChEBI" id="CHEBI:58349"/>
    </ligand>
</feature>
<accession>Q03LH5</accession>
<evidence type="ECO:0000255" key="1">
    <source>
        <dbReference type="HAMAP-Rule" id="MF_00222"/>
    </source>
</evidence>
<organism>
    <name type="scientific">Streptococcus thermophilus (strain ATCC BAA-491 / LMD-9)</name>
    <dbReference type="NCBI Taxonomy" id="322159"/>
    <lineage>
        <taxon>Bacteria</taxon>
        <taxon>Bacillati</taxon>
        <taxon>Bacillota</taxon>
        <taxon>Bacilli</taxon>
        <taxon>Lactobacillales</taxon>
        <taxon>Streptococcaceae</taxon>
        <taxon>Streptococcus</taxon>
    </lineage>
</organism>
<comment type="function">
    <text evidence="1">Involved in the biosynthesis of the chorismate, which leads to the biosynthesis of aromatic amino acids. Catalyzes the reversible NADPH linked reduction of 3-dehydroshikimate (DHSA) to yield shikimate (SA).</text>
</comment>
<comment type="catalytic activity">
    <reaction evidence="1">
        <text>shikimate + NADP(+) = 3-dehydroshikimate + NADPH + H(+)</text>
        <dbReference type="Rhea" id="RHEA:17737"/>
        <dbReference type="ChEBI" id="CHEBI:15378"/>
        <dbReference type="ChEBI" id="CHEBI:16630"/>
        <dbReference type="ChEBI" id="CHEBI:36208"/>
        <dbReference type="ChEBI" id="CHEBI:57783"/>
        <dbReference type="ChEBI" id="CHEBI:58349"/>
        <dbReference type="EC" id="1.1.1.25"/>
    </reaction>
</comment>
<comment type="pathway">
    <text evidence="1">Metabolic intermediate biosynthesis; chorismate biosynthesis; chorismate from D-erythrose 4-phosphate and phosphoenolpyruvate: step 4/7.</text>
</comment>
<comment type="subunit">
    <text evidence="1">Homodimer.</text>
</comment>
<comment type="similarity">
    <text evidence="1">Belongs to the shikimate dehydrogenase family.</text>
</comment>
<name>AROE_STRTD</name>
<proteinExistence type="inferred from homology"/>
<reference key="1">
    <citation type="journal article" date="2006" name="Proc. Natl. Acad. Sci. U.S.A.">
        <title>Comparative genomics of the lactic acid bacteria.</title>
        <authorList>
            <person name="Makarova K.S."/>
            <person name="Slesarev A."/>
            <person name="Wolf Y.I."/>
            <person name="Sorokin A."/>
            <person name="Mirkin B."/>
            <person name="Koonin E.V."/>
            <person name="Pavlov A."/>
            <person name="Pavlova N."/>
            <person name="Karamychev V."/>
            <person name="Polouchine N."/>
            <person name="Shakhova V."/>
            <person name="Grigoriev I."/>
            <person name="Lou Y."/>
            <person name="Rohksar D."/>
            <person name="Lucas S."/>
            <person name="Huang K."/>
            <person name="Goodstein D.M."/>
            <person name="Hawkins T."/>
            <person name="Plengvidhya V."/>
            <person name="Welker D."/>
            <person name="Hughes J."/>
            <person name="Goh Y."/>
            <person name="Benson A."/>
            <person name="Baldwin K."/>
            <person name="Lee J.-H."/>
            <person name="Diaz-Muniz I."/>
            <person name="Dosti B."/>
            <person name="Smeianov V."/>
            <person name="Wechter W."/>
            <person name="Barabote R."/>
            <person name="Lorca G."/>
            <person name="Altermann E."/>
            <person name="Barrangou R."/>
            <person name="Ganesan B."/>
            <person name="Xie Y."/>
            <person name="Rawsthorne H."/>
            <person name="Tamir D."/>
            <person name="Parker C."/>
            <person name="Breidt F."/>
            <person name="Broadbent J.R."/>
            <person name="Hutkins R."/>
            <person name="O'Sullivan D."/>
            <person name="Steele J."/>
            <person name="Unlu G."/>
            <person name="Saier M.H. Jr."/>
            <person name="Klaenhammer T."/>
            <person name="Richardson P."/>
            <person name="Kozyavkin S."/>
            <person name="Weimer B.C."/>
            <person name="Mills D.A."/>
        </authorList>
    </citation>
    <scope>NUCLEOTIDE SEQUENCE [LARGE SCALE GENOMIC DNA]</scope>
    <source>
        <strain>ATCC BAA-491 / LMD-9</strain>
    </source>
</reference>
<sequence length="285" mass="31680">MRIDGHTRLAAVVASPIKHSISPFIHNLAFEKTHVNGVYVAWEIPESDLAETVENIRRYNMFGINLSMPYKEKVIPFLDGLSPEAQLIGAVNTVVNRDGRLIGHNTDGFGFFASLKNFNPKDTHIMILGAGGAAKSIVTQAVLDGAKKVSIYVRPQSLVKAKENFRTLLDQTDCYLEFHDLTDADHFQKELRQTDLLVNATSVGMDGESLPISIDTRFPKELLVADIIYQPFETPFLALARKQEIEAVNGLGMLLYQAAGAFKLWTGENMPTGAIWQELENIYNS</sequence>
<protein>
    <recommendedName>
        <fullName evidence="1">Shikimate dehydrogenase (NADP(+))</fullName>
        <shortName evidence="1">SDH</shortName>
        <ecNumber evidence="1">1.1.1.25</ecNumber>
    </recommendedName>
</protein>